<accession>Q657S5</accession>
<accession>A0A0P0UWZ7</accession>
<proteinExistence type="evidence at transcript level"/>
<keyword id="KW-1003">Cell membrane</keyword>
<keyword id="KW-0472">Membrane</keyword>
<keyword id="KW-0592">Phosphate transport</keyword>
<keyword id="KW-1185">Reference proteome</keyword>
<keyword id="KW-0812">Transmembrane</keyword>
<keyword id="KW-1133">Transmembrane helix</keyword>
<keyword id="KW-0813">Transport</keyword>
<gene>
    <name type="primary">PHO1-1</name>
    <name type="ordered locus">Os01g0110100</name>
    <name type="ordered locus">LOC_Os01g02000</name>
    <name type="ORF">P0439B06.4</name>
    <name type="ORF">P0482C06.38</name>
</gene>
<evidence type="ECO:0000250" key="1"/>
<evidence type="ECO:0000255" key="2"/>
<evidence type="ECO:0000255" key="3">
    <source>
        <dbReference type="PROSITE-ProRule" id="PRU00712"/>
    </source>
</evidence>
<evidence type="ECO:0000255" key="4">
    <source>
        <dbReference type="PROSITE-ProRule" id="PRU00714"/>
    </source>
</evidence>
<evidence type="ECO:0000256" key="5">
    <source>
        <dbReference type="SAM" id="MobiDB-lite"/>
    </source>
</evidence>
<evidence type="ECO:0000269" key="6">
    <source>
    </source>
</evidence>
<evidence type="ECO:0000305" key="7"/>
<name>PHO11_ORYSJ</name>
<sequence length="799" mass="91192">MVKFSKQFEGQLVPEWKHAFVDYSLLKKDLKRMQHDYSPQGTIITTSTPHDHHQQQQSVAAPSSYNLSHCRLLLHKLPAAFFGSNNADHAGAIQVRRRVGRGEVYETEVTPEMETTAATAAREFFARLDAQLNKVNHFYKAKEEEFLHRGHSLRKQMDILLDLKSRSSSSLSGHHRAAAGDDPSISSSSATSGAEDESTRYVTSATDTDESQHETAVMRDPEELSAEQGLEDSGSLSRQSLGRTVSSCQRKNLKINIPLTTPCRTISALTDLLRDDLVSQPKNKCDSDAGITFTTINKTKLRHAEKMIKGAFIELYKGLGYLTTYRNLNMMAFVKILKKFEKVSGKQVLSVYLRAVESSYFNSSGEALKLMDEVEDVFVRHFAAGNRRKAMKYLKPTQRKESHTVTFFIGLMTGCFVALFLGYCIMAHIAGMYTQRRDSIYMETVYPVFSMFSLMFLHLFMYGCNMVAWRKARINYSFIFEFAAGRELKYRDVFLVCTASMAVIVGVMFAHLSLAVRGFHAQAIPGFLLLGFLLLLFCPFNMVYRSTRFQFLRILRNIVFSPLYKVVMVDFFMADQLCSQVPMLRSLEYVACYYISGSYRTQEYGYCINTKHIRDLAYAVSFLPYYWRAMQCARRWFDESDTGHLVNLGKYVSAMLAAGAKVAYEKDRSLGSLSLLVIVSSSATMYQLYWDFVKDWGLLQPNSKNPWLRNDLILKSKSIYYLSMGLNLVLRLAWLQTVIHPNFGSLDSRVTSFFLAALEVIRRGHWNFYRLENEHLNNAGKFRAVKTVPLPFHEADEED</sequence>
<protein>
    <recommendedName>
        <fullName>Phosphate transporter PHO1-1</fullName>
    </recommendedName>
    <alternativeName>
        <fullName>Protein PHO1-1</fullName>
        <shortName>OsPHO1;1</shortName>
    </alternativeName>
</protein>
<comment type="function">
    <text evidence="1">May transport inorganic phosphate (Pi).</text>
</comment>
<comment type="subcellular location">
    <subcellularLocation>
        <location evidence="7">Cell membrane</location>
        <topology evidence="7">Multi-pass membrane protein</topology>
    </subcellularLocation>
</comment>
<comment type="tissue specificity">
    <text evidence="6">Expressed in roots and flowers.</text>
</comment>
<comment type="induction">
    <text evidence="6">By Pi deficiency in roots.</text>
</comment>
<comment type="disruption phenotype">
    <text evidence="6">No visible phenotype.</text>
</comment>
<comment type="similarity">
    <text evidence="7">Belongs to the SYG1 (TC 2.A.94) family.</text>
</comment>
<comment type="sequence caution" evidence="7">
    <conflict type="erroneous gene model prediction">
        <sequence resource="EMBL-CDS" id="BAD44869"/>
    </conflict>
</comment>
<comment type="sequence caution" evidence="7">
    <conflict type="erroneous gene model prediction">
        <sequence resource="EMBL-CDS" id="BAD44936"/>
    </conflict>
</comment>
<reference key="1">
    <citation type="journal article" date="2002" name="Nature">
        <title>The genome sequence and structure of rice chromosome 1.</title>
        <authorList>
            <person name="Sasaki T."/>
            <person name="Matsumoto T."/>
            <person name="Yamamoto K."/>
            <person name="Sakata K."/>
            <person name="Baba T."/>
            <person name="Katayose Y."/>
            <person name="Wu J."/>
            <person name="Niimura Y."/>
            <person name="Cheng Z."/>
            <person name="Nagamura Y."/>
            <person name="Antonio B.A."/>
            <person name="Kanamori H."/>
            <person name="Hosokawa S."/>
            <person name="Masukawa M."/>
            <person name="Arikawa K."/>
            <person name="Chiden Y."/>
            <person name="Hayashi M."/>
            <person name="Okamoto M."/>
            <person name="Ando T."/>
            <person name="Aoki H."/>
            <person name="Arita K."/>
            <person name="Hamada M."/>
            <person name="Harada C."/>
            <person name="Hijishita S."/>
            <person name="Honda M."/>
            <person name="Ichikawa Y."/>
            <person name="Idonuma A."/>
            <person name="Iijima M."/>
            <person name="Ikeda M."/>
            <person name="Ikeno M."/>
            <person name="Ito S."/>
            <person name="Ito T."/>
            <person name="Ito Y."/>
            <person name="Ito Y."/>
            <person name="Iwabuchi A."/>
            <person name="Kamiya K."/>
            <person name="Karasawa W."/>
            <person name="Katagiri S."/>
            <person name="Kikuta A."/>
            <person name="Kobayashi N."/>
            <person name="Kono I."/>
            <person name="Machita K."/>
            <person name="Maehara T."/>
            <person name="Mizuno H."/>
            <person name="Mizubayashi T."/>
            <person name="Mukai Y."/>
            <person name="Nagasaki H."/>
            <person name="Nakashima M."/>
            <person name="Nakama Y."/>
            <person name="Nakamichi Y."/>
            <person name="Nakamura M."/>
            <person name="Namiki N."/>
            <person name="Negishi M."/>
            <person name="Ohta I."/>
            <person name="Ono N."/>
            <person name="Saji S."/>
            <person name="Sakai K."/>
            <person name="Shibata M."/>
            <person name="Shimokawa T."/>
            <person name="Shomura A."/>
            <person name="Song J."/>
            <person name="Takazaki Y."/>
            <person name="Terasawa K."/>
            <person name="Tsuji K."/>
            <person name="Waki K."/>
            <person name="Yamagata H."/>
            <person name="Yamane H."/>
            <person name="Yoshiki S."/>
            <person name="Yoshihara R."/>
            <person name="Yukawa K."/>
            <person name="Zhong H."/>
            <person name="Iwama H."/>
            <person name="Endo T."/>
            <person name="Ito H."/>
            <person name="Hahn J.H."/>
            <person name="Kim H.-I."/>
            <person name="Eun M.-Y."/>
            <person name="Yano M."/>
            <person name="Jiang J."/>
            <person name="Gojobori T."/>
        </authorList>
    </citation>
    <scope>NUCLEOTIDE SEQUENCE [LARGE SCALE GENOMIC DNA]</scope>
    <source>
        <strain>cv. Nipponbare</strain>
    </source>
</reference>
<reference key="2">
    <citation type="journal article" date="2005" name="Nature">
        <title>The map-based sequence of the rice genome.</title>
        <authorList>
            <consortium name="International rice genome sequencing project (IRGSP)"/>
        </authorList>
    </citation>
    <scope>NUCLEOTIDE SEQUENCE [LARGE SCALE GENOMIC DNA]</scope>
    <source>
        <strain>cv. Nipponbare</strain>
    </source>
</reference>
<reference key="3">
    <citation type="journal article" date="2013" name="Rice">
        <title>Improvement of the Oryza sativa Nipponbare reference genome using next generation sequence and optical map data.</title>
        <authorList>
            <person name="Kawahara Y."/>
            <person name="de la Bastide M."/>
            <person name="Hamilton J.P."/>
            <person name="Kanamori H."/>
            <person name="McCombie W.R."/>
            <person name="Ouyang S."/>
            <person name="Schwartz D.C."/>
            <person name="Tanaka T."/>
            <person name="Wu J."/>
            <person name="Zhou S."/>
            <person name="Childs K.L."/>
            <person name="Davidson R.M."/>
            <person name="Lin H."/>
            <person name="Quesada-Ocampo L."/>
            <person name="Vaillancourt B."/>
            <person name="Sakai H."/>
            <person name="Lee S.S."/>
            <person name="Kim J."/>
            <person name="Numa H."/>
            <person name="Itoh T."/>
            <person name="Buell C.R."/>
            <person name="Matsumoto T."/>
        </authorList>
    </citation>
    <scope>GENOME REANNOTATION</scope>
    <source>
        <strain>cv. Nipponbare</strain>
    </source>
</reference>
<reference key="4">
    <citation type="submission" date="2006-10" db="EMBL/GenBank/DDBJ databases">
        <title>Oryza sativa full length cDNA.</title>
        <authorList>
            <consortium name="The rice full-length cDNA consortium"/>
        </authorList>
    </citation>
    <scope>NUCLEOTIDE SEQUENCE [LARGE SCALE MRNA]</scope>
    <source>
        <strain>cv. Nipponbare</strain>
    </source>
</reference>
<reference key="5">
    <citation type="journal article" date="2010" name="Plant Physiol.">
        <title>Characterization of the rice PHO1 gene family reveals a key role for OsPHO1;2 in phosphate homeostasis and the evolution of a distinct clade in dicotyledons.</title>
        <authorList>
            <person name="Secco D."/>
            <person name="Baumann A."/>
            <person name="Poirier Y."/>
        </authorList>
    </citation>
    <scope>TISSUE SPECIFICITY</scope>
    <scope>INDUCTION</scope>
    <scope>GENE FAMILY</scope>
    <scope>NOMENCLATURE</scope>
    <scope>DISRUPTION PHENOTYPE</scope>
</reference>
<organism>
    <name type="scientific">Oryza sativa subsp. japonica</name>
    <name type="common">Rice</name>
    <dbReference type="NCBI Taxonomy" id="39947"/>
    <lineage>
        <taxon>Eukaryota</taxon>
        <taxon>Viridiplantae</taxon>
        <taxon>Streptophyta</taxon>
        <taxon>Embryophyta</taxon>
        <taxon>Tracheophyta</taxon>
        <taxon>Spermatophyta</taxon>
        <taxon>Magnoliopsida</taxon>
        <taxon>Liliopsida</taxon>
        <taxon>Poales</taxon>
        <taxon>Poaceae</taxon>
        <taxon>BOP clade</taxon>
        <taxon>Oryzoideae</taxon>
        <taxon>Oryzeae</taxon>
        <taxon>Oryzinae</taxon>
        <taxon>Oryza</taxon>
        <taxon>Oryza sativa</taxon>
    </lineage>
</organism>
<dbReference type="EMBL" id="AP002845">
    <property type="protein sequence ID" value="BAD44869.1"/>
    <property type="status" value="ALT_SEQ"/>
    <property type="molecule type" value="Genomic_DNA"/>
</dbReference>
<dbReference type="EMBL" id="AP002882">
    <property type="protein sequence ID" value="BAD44936.1"/>
    <property type="status" value="ALT_SEQ"/>
    <property type="molecule type" value="Genomic_DNA"/>
</dbReference>
<dbReference type="EMBL" id="AP014957">
    <property type="protein sequence ID" value="BAS70005.1"/>
    <property type="molecule type" value="Genomic_DNA"/>
</dbReference>
<dbReference type="EMBL" id="AK242852">
    <property type="status" value="NOT_ANNOTATED_CDS"/>
    <property type="molecule type" value="mRNA"/>
</dbReference>
<dbReference type="RefSeq" id="XP_015623371.1">
    <property type="nucleotide sequence ID" value="XM_015767885.1"/>
</dbReference>
<dbReference type="SMR" id="Q657S5"/>
<dbReference type="FunCoup" id="Q657S5">
    <property type="interactions" value="1717"/>
</dbReference>
<dbReference type="STRING" id="39947.Q657S5"/>
<dbReference type="PaxDb" id="39947-Q657S5"/>
<dbReference type="EnsemblPlants" id="Os01t0110100-01">
    <property type="protein sequence ID" value="Os01t0110100-01"/>
    <property type="gene ID" value="Os01g0110100"/>
</dbReference>
<dbReference type="Gramene" id="Os01t0110100-01">
    <property type="protein sequence ID" value="Os01t0110100-01"/>
    <property type="gene ID" value="Os01g0110100"/>
</dbReference>
<dbReference type="eggNOG" id="KOG1162">
    <property type="taxonomic scope" value="Eukaryota"/>
</dbReference>
<dbReference type="HOGENOM" id="CLU_006116_2_0_1"/>
<dbReference type="InParanoid" id="Q657S5"/>
<dbReference type="OMA" id="AHMAGLY"/>
<dbReference type="OrthoDB" id="9970435at2759"/>
<dbReference type="Proteomes" id="UP000000763">
    <property type="component" value="Chromosome 1"/>
</dbReference>
<dbReference type="Proteomes" id="UP000059680">
    <property type="component" value="Chromosome 1"/>
</dbReference>
<dbReference type="GO" id="GO:0005886">
    <property type="term" value="C:plasma membrane"/>
    <property type="evidence" value="ECO:0007669"/>
    <property type="project" value="UniProtKB-SubCell"/>
</dbReference>
<dbReference type="GO" id="GO:0005802">
    <property type="term" value="C:trans-Golgi network"/>
    <property type="evidence" value="ECO:0000318"/>
    <property type="project" value="GO_Central"/>
</dbReference>
<dbReference type="GO" id="GO:0000822">
    <property type="term" value="F:inositol hexakisphosphate binding"/>
    <property type="evidence" value="ECO:0000318"/>
    <property type="project" value="GO_Central"/>
</dbReference>
<dbReference type="GO" id="GO:0005315">
    <property type="term" value="F:phosphate transmembrane transporter activity"/>
    <property type="evidence" value="ECO:0000318"/>
    <property type="project" value="GO_Central"/>
</dbReference>
<dbReference type="GO" id="GO:0016036">
    <property type="term" value="P:cellular response to phosphate starvation"/>
    <property type="evidence" value="ECO:0000318"/>
    <property type="project" value="GO_Central"/>
</dbReference>
<dbReference type="GO" id="GO:0006817">
    <property type="term" value="P:phosphate ion transport"/>
    <property type="evidence" value="ECO:0000318"/>
    <property type="project" value="GO_Central"/>
</dbReference>
<dbReference type="CDD" id="cd14476">
    <property type="entry name" value="SPX_PHO1_like"/>
    <property type="match status" value="1"/>
</dbReference>
<dbReference type="InterPro" id="IPR004342">
    <property type="entry name" value="EXS_C"/>
</dbReference>
<dbReference type="InterPro" id="IPR052486">
    <property type="entry name" value="PHO1"/>
</dbReference>
<dbReference type="InterPro" id="IPR034092">
    <property type="entry name" value="PHO1_SPX"/>
</dbReference>
<dbReference type="InterPro" id="IPR004331">
    <property type="entry name" value="SPX_dom"/>
</dbReference>
<dbReference type="PANTHER" id="PTHR48477">
    <property type="entry name" value="PHOSPHATE TRANSPORTER PHO1"/>
    <property type="match status" value="1"/>
</dbReference>
<dbReference type="PANTHER" id="PTHR48477:SF1">
    <property type="entry name" value="PHOSPHATE TRANSPORTER PHO1"/>
    <property type="match status" value="1"/>
</dbReference>
<dbReference type="Pfam" id="PF03124">
    <property type="entry name" value="EXS"/>
    <property type="match status" value="1"/>
</dbReference>
<dbReference type="Pfam" id="PF03105">
    <property type="entry name" value="SPX"/>
    <property type="match status" value="1"/>
</dbReference>
<dbReference type="PROSITE" id="PS51380">
    <property type="entry name" value="EXS"/>
    <property type="match status" value="1"/>
</dbReference>
<dbReference type="PROSITE" id="PS51382">
    <property type="entry name" value="SPX"/>
    <property type="match status" value="1"/>
</dbReference>
<feature type="chain" id="PRO_0000398165" description="Phosphate transporter PHO1-1">
    <location>
        <begin position="1"/>
        <end position="799"/>
    </location>
</feature>
<feature type="topological domain" description="Cytoplasmic" evidence="2">
    <location>
        <begin position="1"/>
        <end position="406"/>
    </location>
</feature>
<feature type="transmembrane region" description="Helical" evidence="2">
    <location>
        <begin position="407"/>
        <end position="427"/>
    </location>
</feature>
<feature type="topological domain" description="Extracellular" evidence="2">
    <location>
        <begin position="428"/>
        <end position="447"/>
    </location>
</feature>
<feature type="transmembrane region" description="Helical" evidence="2">
    <location>
        <begin position="448"/>
        <end position="468"/>
    </location>
</feature>
<feature type="topological domain" description="Cytoplasmic" evidence="2">
    <location>
        <begin position="469"/>
        <end position="492"/>
    </location>
</feature>
<feature type="transmembrane region" description="Helical" evidence="2">
    <location>
        <begin position="493"/>
        <end position="513"/>
    </location>
</feature>
<feature type="topological domain" description="Extracellular" evidence="2">
    <location>
        <begin position="514"/>
        <end position="522"/>
    </location>
</feature>
<feature type="transmembrane region" description="Helical" evidence="2">
    <location>
        <begin position="523"/>
        <end position="543"/>
    </location>
</feature>
<feature type="topological domain" description="Cytoplasmic" evidence="2">
    <location>
        <begin position="544"/>
        <end position="672"/>
    </location>
</feature>
<feature type="transmembrane region" description="Helical" evidence="2">
    <location>
        <begin position="673"/>
        <end position="693"/>
    </location>
</feature>
<feature type="topological domain" description="Extracellular" evidence="2">
    <location>
        <begin position="694"/>
        <end position="718"/>
    </location>
</feature>
<feature type="transmembrane region" description="Helical" evidence="2">
    <location>
        <begin position="719"/>
        <end position="739"/>
    </location>
</feature>
<feature type="topological domain" description="Cytoplasmic" evidence="2">
    <location>
        <begin position="740"/>
        <end position="799"/>
    </location>
</feature>
<feature type="domain" description="SPX" evidence="4">
    <location>
        <begin position="2"/>
        <end position="354"/>
    </location>
</feature>
<feature type="domain" description="EXS" evidence="3">
    <location>
        <begin position="608"/>
        <end position="799"/>
    </location>
</feature>
<feature type="region of interest" description="Disordered" evidence="5">
    <location>
        <begin position="170"/>
        <end position="243"/>
    </location>
</feature>
<feature type="compositionally biased region" description="Low complexity" evidence="5">
    <location>
        <begin position="180"/>
        <end position="193"/>
    </location>
</feature>
<feature type="compositionally biased region" description="Basic and acidic residues" evidence="5">
    <location>
        <begin position="210"/>
        <end position="222"/>
    </location>
</feature>
<feature type="compositionally biased region" description="Polar residues" evidence="5">
    <location>
        <begin position="234"/>
        <end position="243"/>
    </location>
</feature>